<feature type="chain" id="PRO_0000106732" description="Uncharacterized protein MJ0183">
    <location>
        <begin position="1"/>
        <end position="48"/>
    </location>
</feature>
<proteinExistence type="predicted"/>
<gene>
    <name type="ordered locus">MJ0183</name>
</gene>
<protein>
    <recommendedName>
        <fullName>Uncharacterized protein MJ0183</fullName>
    </recommendedName>
</protein>
<dbReference type="EMBL" id="L77117">
    <property type="protein sequence ID" value="AAB98180.1"/>
    <property type="molecule type" value="Genomic_DNA"/>
</dbReference>
<dbReference type="PIR" id="H64322">
    <property type="entry name" value="H64322"/>
</dbReference>
<dbReference type="RefSeq" id="WP_010869678.1">
    <property type="nucleotide sequence ID" value="NC_000909.1"/>
</dbReference>
<dbReference type="SMR" id="Q57642"/>
<dbReference type="STRING" id="243232.MJ_0183"/>
<dbReference type="PaxDb" id="243232-MJ_0183"/>
<dbReference type="EnsemblBacteria" id="AAB98180">
    <property type="protein sequence ID" value="AAB98180"/>
    <property type="gene ID" value="MJ_0183"/>
</dbReference>
<dbReference type="GeneID" id="43875334"/>
<dbReference type="KEGG" id="mja:MJ_0183"/>
<dbReference type="HOGENOM" id="CLU_3147975_0_0_2"/>
<dbReference type="InParanoid" id="Q57642"/>
<dbReference type="Proteomes" id="UP000000805">
    <property type="component" value="Chromosome"/>
</dbReference>
<accession>Q57642</accession>
<sequence>MLSPDMPLKNLDEYDRLGIKKKADAIARFIENRWDYLQKNNMIALYGN</sequence>
<organism>
    <name type="scientific">Methanocaldococcus jannaschii (strain ATCC 43067 / DSM 2661 / JAL-1 / JCM 10045 / NBRC 100440)</name>
    <name type="common">Methanococcus jannaschii</name>
    <dbReference type="NCBI Taxonomy" id="243232"/>
    <lineage>
        <taxon>Archaea</taxon>
        <taxon>Methanobacteriati</taxon>
        <taxon>Methanobacteriota</taxon>
        <taxon>Methanomada group</taxon>
        <taxon>Methanococci</taxon>
        <taxon>Methanococcales</taxon>
        <taxon>Methanocaldococcaceae</taxon>
        <taxon>Methanocaldococcus</taxon>
    </lineage>
</organism>
<reference key="1">
    <citation type="journal article" date="1996" name="Science">
        <title>Complete genome sequence of the methanogenic archaeon, Methanococcus jannaschii.</title>
        <authorList>
            <person name="Bult C.J."/>
            <person name="White O."/>
            <person name="Olsen G.J."/>
            <person name="Zhou L."/>
            <person name="Fleischmann R.D."/>
            <person name="Sutton G.G."/>
            <person name="Blake J.A."/>
            <person name="FitzGerald L.M."/>
            <person name="Clayton R.A."/>
            <person name="Gocayne J.D."/>
            <person name="Kerlavage A.R."/>
            <person name="Dougherty B.A."/>
            <person name="Tomb J.-F."/>
            <person name="Adams M.D."/>
            <person name="Reich C.I."/>
            <person name="Overbeek R."/>
            <person name="Kirkness E.F."/>
            <person name="Weinstock K.G."/>
            <person name="Merrick J.M."/>
            <person name="Glodek A."/>
            <person name="Scott J.L."/>
            <person name="Geoghagen N.S.M."/>
            <person name="Weidman J.F."/>
            <person name="Fuhrmann J.L."/>
            <person name="Nguyen D."/>
            <person name="Utterback T.R."/>
            <person name="Kelley J.M."/>
            <person name="Peterson J.D."/>
            <person name="Sadow P.W."/>
            <person name="Hanna M.C."/>
            <person name="Cotton M.D."/>
            <person name="Roberts K.M."/>
            <person name="Hurst M.A."/>
            <person name="Kaine B.P."/>
            <person name="Borodovsky M."/>
            <person name="Klenk H.-P."/>
            <person name="Fraser C.M."/>
            <person name="Smith H.O."/>
            <person name="Woese C.R."/>
            <person name="Venter J.C."/>
        </authorList>
    </citation>
    <scope>NUCLEOTIDE SEQUENCE [LARGE SCALE GENOMIC DNA]</scope>
    <source>
        <strain>ATCC 43067 / DSM 2661 / JAL-1 / JCM 10045 / NBRC 100440</strain>
    </source>
</reference>
<keyword id="KW-1185">Reference proteome</keyword>
<name>Y183_METJA</name>